<feature type="chain" id="PRO_0000314191" description="UPF0262 protein BruAb1_0279">
    <location>
        <begin position="1"/>
        <end position="160"/>
    </location>
</feature>
<reference key="1">
    <citation type="journal article" date="2005" name="J. Bacteriol.">
        <title>Completion of the genome sequence of Brucella abortus and comparison to the highly similar genomes of Brucella melitensis and Brucella suis.</title>
        <authorList>
            <person name="Halling S.M."/>
            <person name="Peterson-Burch B.D."/>
            <person name="Bricker B.J."/>
            <person name="Zuerner R.L."/>
            <person name="Qing Z."/>
            <person name="Li L.-L."/>
            <person name="Kapur V."/>
            <person name="Alt D.P."/>
            <person name="Olsen S.C."/>
        </authorList>
    </citation>
    <scope>NUCLEOTIDE SEQUENCE [LARGE SCALE GENOMIC DNA]</scope>
    <source>
        <strain>9-941</strain>
    </source>
</reference>
<accession>Q57FA0</accession>
<protein>
    <recommendedName>
        <fullName evidence="1">UPF0262 protein BruAb1_0279</fullName>
    </recommendedName>
</protein>
<comment type="similarity">
    <text evidence="1">Belongs to the UPF0262 family.</text>
</comment>
<sequence length="160" mass="18129">MTADVPNARLVDVELDESIGRSTPDVEHERAVAIFDLIEENSFHPVGDQKGGPYRLKLSLMESRLIFSITRENGDAVATHILSLTPLRRVVRDYFMICESYYQAIRSATPSKIEAIDMGRRGLHNEGSQTLQARLKGKIEVDFDTARRLFTLVCVLHWRG</sequence>
<organism>
    <name type="scientific">Brucella abortus biovar 1 (strain 9-941)</name>
    <dbReference type="NCBI Taxonomy" id="262698"/>
    <lineage>
        <taxon>Bacteria</taxon>
        <taxon>Pseudomonadati</taxon>
        <taxon>Pseudomonadota</taxon>
        <taxon>Alphaproteobacteria</taxon>
        <taxon>Hyphomicrobiales</taxon>
        <taxon>Brucellaceae</taxon>
        <taxon>Brucella/Ochrobactrum group</taxon>
        <taxon>Brucella</taxon>
    </lineage>
</organism>
<gene>
    <name type="ordered locus">BruAb1_0279</name>
</gene>
<evidence type="ECO:0000255" key="1">
    <source>
        <dbReference type="HAMAP-Rule" id="MF_00678"/>
    </source>
</evidence>
<name>Y279_BRUAB</name>
<proteinExistence type="inferred from homology"/>
<dbReference type="EMBL" id="AE017223">
    <property type="protein sequence ID" value="AAX73684.1"/>
    <property type="molecule type" value="Genomic_DNA"/>
</dbReference>
<dbReference type="RefSeq" id="WP_002965533.1">
    <property type="nucleotide sequence ID" value="NC_006932.1"/>
</dbReference>
<dbReference type="EnsemblBacteria" id="AAX73684">
    <property type="protein sequence ID" value="AAX73684"/>
    <property type="gene ID" value="BruAb1_0279"/>
</dbReference>
<dbReference type="KEGG" id="bmb:BruAb1_0279"/>
<dbReference type="HOGENOM" id="CLU_112904_0_0_5"/>
<dbReference type="Proteomes" id="UP000000540">
    <property type="component" value="Chromosome I"/>
</dbReference>
<dbReference type="HAMAP" id="MF_00678">
    <property type="entry name" value="UPF0262"/>
    <property type="match status" value="1"/>
</dbReference>
<dbReference type="InterPro" id="IPR008321">
    <property type="entry name" value="UCP032146"/>
</dbReference>
<dbReference type="NCBIfam" id="NF002769">
    <property type="entry name" value="PRK02853.1"/>
    <property type="match status" value="1"/>
</dbReference>
<dbReference type="Pfam" id="PF06793">
    <property type="entry name" value="UPF0262"/>
    <property type="match status" value="1"/>
</dbReference>
<dbReference type="PIRSF" id="PIRSF032146">
    <property type="entry name" value="UCP032146"/>
    <property type="match status" value="1"/>
</dbReference>